<evidence type="ECO:0000255" key="1">
    <source>
        <dbReference type="HAMAP-Rule" id="MF_01113"/>
    </source>
</evidence>
<evidence type="ECO:0000305" key="2"/>
<accession>Q72MY7</accession>
<comment type="function">
    <text evidence="1">Poorly processive, error-prone DNA polymerase involved in untargeted mutagenesis. Copies undamaged DNA at stalled replication forks, which arise in vivo from mismatched or misaligned primer ends. These misaligned primers can be extended by PolIV. Exhibits no 3'-5' exonuclease (proofreading) activity. May be involved in translesional synthesis, in conjunction with the beta clamp from PolIII.</text>
</comment>
<comment type="catalytic activity">
    <reaction evidence="1">
        <text>DNA(n) + a 2'-deoxyribonucleoside 5'-triphosphate = DNA(n+1) + diphosphate</text>
        <dbReference type="Rhea" id="RHEA:22508"/>
        <dbReference type="Rhea" id="RHEA-COMP:17339"/>
        <dbReference type="Rhea" id="RHEA-COMP:17340"/>
        <dbReference type="ChEBI" id="CHEBI:33019"/>
        <dbReference type="ChEBI" id="CHEBI:61560"/>
        <dbReference type="ChEBI" id="CHEBI:173112"/>
        <dbReference type="EC" id="2.7.7.7"/>
    </reaction>
</comment>
<comment type="cofactor">
    <cofactor evidence="1">
        <name>Mg(2+)</name>
        <dbReference type="ChEBI" id="CHEBI:18420"/>
    </cofactor>
    <text evidence="1">Binds 2 magnesium ions per subunit.</text>
</comment>
<comment type="subunit">
    <text evidence="1">Monomer.</text>
</comment>
<comment type="subcellular location">
    <subcellularLocation>
        <location evidence="1">Cytoplasm</location>
    </subcellularLocation>
</comment>
<comment type="similarity">
    <text evidence="1">Belongs to the DNA polymerase type-Y family.</text>
</comment>
<comment type="sequence caution" evidence="2">
    <conflict type="erroneous initiation">
        <sequence resource="EMBL-CDS" id="AAS71601"/>
    </conflict>
    <text>Extended N-terminus.</text>
</comment>
<protein>
    <recommendedName>
        <fullName evidence="1">DNA polymerase IV</fullName>
        <shortName evidence="1">Pol IV</shortName>
        <ecNumber evidence="1">2.7.7.7</ecNumber>
    </recommendedName>
</protein>
<feature type="chain" id="PRO_0000173919" description="DNA polymerase IV">
    <location>
        <begin position="1"/>
        <end position="362"/>
    </location>
</feature>
<feature type="domain" description="UmuC" evidence="1">
    <location>
        <begin position="6"/>
        <end position="187"/>
    </location>
</feature>
<feature type="active site" evidence="1">
    <location>
        <position position="106"/>
    </location>
</feature>
<feature type="binding site" evidence="1">
    <location>
        <position position="10"/>
    </location>
    <ligand>
        <name>Mg(2+)</name>
        <dbReference type="ChEBI" id="CHEBI:18420"/>
    </ligand>
</feature>
<feature type="binding site" evidence="1">
    <location>
        <position position="105"/>
    </location>
    <ligand>
        <name>Mg(2+)</name>
        <dbReference type="ChEBI" id="CHEBI:18420"/>
    </ligand>
</feature>
<feature type="site" description="Substrate discrimination" evidence="1">
    <location>
        <position position="15"/>
    </location>
</feature>
<proteinExistence type="inferred from homology"/>
<keyword id="KW-0963">Cytoplasm</keyword>
<keyword id="KW-0227">DNA damage</keyword>
<keyword id="KW-0234">DNA repair</keyword>
<keyword id="KW-0235">DNA replication</keyword>
<keyword id="KW-0238">DNA-binding</keyword>
<keyword id="KW-0239">DNA-directed DNA polymerase</keyword>
<keyword id="KW-0460">Magnesium</keyword>
<keyword id="KW-0479">Metal-binding</keyword>
<keyword id="KW-0515">Mutator protein</keyword>
<keyword id="KW-0548">Nucleotidyltransferase</keyword>
<keyword id="KW-0808">Transferase</keyword>
<organism>
    <name type="scientific">Leptospira interrogans serogroup Icterohaemorrhagiae serovar copenhageni (strain Fiocruz L1-130)</name>
    <dbReference type="NCBI Taxonomy" id="267671"/>
    <lineage>
        <taxon>Bacteria</taxon>
        <taxon>Pseudomonadati</taxon>
        <taxon>Spirochaetota</taxon>
        <taxon>Spirochaetia</taxon>
        <taxon>Leptospirales</taxon>
        <taxon>Leptospiraceae</taxon>
        <taxon>Leptospira</taxon>
    </lineage>
</organism>
<name>DPO4_LEPIC</name>
<dbReference type="EC" id="2.7.7.7" evidence="1"/>
<dbReference type="EMBL" id="AE016823">
    <property type="protein sequence ID" value="AAS71601.1"/>
    <property type="status" value="ALT_INIT"/>
    <property type="molecule type" value="Genomic_DNA"/>
</dbReference>
<dbReference type="RefSeq" id="WP_000450032.1">
    <property type="nucleotide sequence ID" value="NC_005823.1"/>
</dbReference>
<dbReference type="SMR" id="Q72MY7"/>
<dbReference type="GeneID" id="61142930"/>
<dbReference type="KEGG" id="lic:LIC_13052"/>
<dbReference type="HOGENOM" id="CLU_012348_1_2_12"/>
<dbReference type="Proteomes" id="UP000007037">
    <property type="component" value="Chromosome I"/>
</dbReference>
<dbReference type="GO" id="GO:0005829">
    <property type="term" value="C:cytosol"/>
    <property type="evidence" value="ECO:0007669"/>
    <property type="project" value="TreeGrafter"/>
</dbReference>
<dbReference type="GO" id="GO:0003684">
    <property type="term" value="F:damaged DNA binding"/>
    <property type="evidence" value="ECO:0007669"/>
    <property type="project" value="InterPro"/>
</dbReference>
<dbReference type="GO" id="GO:0003887">
    <property type="term" value="F:DNA-directed DNA polymerase activity"/>
    <property type="evidence" value="ECO:0007669"/>
    <property type="project" value="UniProtKB-UniRule"/>
</dbReference>
<dbReference type="GO" id="GO:0000287">
    <property type="term" value="F:magnesium ion binding"/>
    <property type="evidence" value="ECO:0007669"/>
    <property type="project" value="UniProtKB-UniRule"/>
</dbReference>
<dbReference type="GO" id="GO:0006261">
    <property type="term" value="P:DNA-templated DNA replication"/>
    <property type="evidence" value="ECO:0007669"/>
    <property type="project" value="UniProtKB-UniRule"/>
</dbReference>
<dbReference type="GO" id="GO:0042276">
    <property type="term" value="P:error-prone translesion synthesis"/>
    <property type="evidence" value="ECO:0007669"/>
    <property type="project" value="TreeGrafter"/>
</dbReference>
<dbReference type="GO" id="GO:0009432">
    <property type="term" value="P:SOS response"/>
    <property type="evidence" value="ECO:0000269"/>
    <property type="project" value="CollecTF"/>
</dbReference>
<dbReference type="CDD" id="cd03586">
    <property type="entry name" value="PolY_Pol_IV_kappa"/>
    <property type="match status" value="1"/>
</dbReference>
<dbReference type="FunFam" id="1.10.150.20:FF:000019">
    <property type="entry name" value="DNA polymerase IV"/>
    <property type="match status" value="1"/>
</dbReference>
<dbReference type="FunFam" id="3.30.1490.100:FF:000004">
    <property type="entry name" value="DNA polymerase IV"/>
    <property type="match status" value="1"/>
</dbReference>
<dbReference type="FunFam" id="3.40.1170.60:FF:000001">
    <property type="entry name" value="DNA polymerase IV"/>
    <property type="match status" value="1"/>
</dbReference>
<dbReference type="Gene3D" id="3.30.70.270">
    <property type="match status" value="1"/>
</dbReference>
<dbReference type="Gene3D" id="3.40.1170.60">
    <property type="match status" value="1"/>
</dbReference>
<dbReference type="Gene3D" id="1.10.150.20">
    <property type="entry name" value="5' to 3' exonuclease, C-terminal subdomain"/>
    <property type="match status" value="1"/>
</dbReference>
<dbReference type="Gene3D" id="3.30.1490.100">
    <property type="entry name" value="DNA polymerase, Y-family, little finger domain"/>
    <property type="match status" value="1"/>
</dbReference>
<dbReference type="HAMAP" id="MF_01113">
    <property type="entry name" value="DNApol_IV"/>
    <property type="match status" value="1"/>
</dbReference>
<dbReference type="InterPro" id="IPR043502">
    <property type="entry name" value="DNA/RNA_pol_sf"/>
</dbReference>
<dbReference type="InterPro" id="IPR036775">
    <property type="entry name" value="DNA_pol_Y-fam_lit_finger_sf"/>
</dbReference>
<dbReference type="InterPro" id="IPR017961">
    <property type="entry name" value="DNA_pol_Y-fam_little_finger"/>
</dbReference>
<dbReference type="InterPro" id="IPR050116">
    <property type="entry name" value="DNA_polymerase-Y"/>
</dbReference>
<dbReference type="InterPro" id="IPR022880">
    <property type="entry name" value="DNApol_IV"/>
</dbReference>
<dbReference type="InterPro" id="IPR024728">
    <property type="entry name" value="PolY_HhH_motif"/>
</dbReference>
<dbReference type="InterPro" id="IPR043128">
    <property type="entry name" value="Rev_trsase/Diguanyl_cyclase"/>
</dbReference>
<dbReference type="InterPro" id="IPR001126">
    <property type="entry name" value="UmuC"/>
</dbReference>
<dbReference type="NCBIfam" id="NF002677">
    <property type="entry name" value="PRK02406.1"/>
    <property type="match status" value="1"/>
</dbReference>
<dbReference type="PANTHER" id="PTHR11076:SF33">
    <property type="entry name" value="DNA POLYMERASE KAPPA"/>
    <property type="match status" value="1"/>
</dbReference>
<dbReference type="PANTHER" id="PTHR11076">
    <property type="entry name" value="DNA REPAIR POLYMERASE UMUC / TRANSFERASE FAMILY MEMBER"/>
    <property type="match status" value="1"/>
</dbReference>
<dbReference type="Pfam" id="PF00817">
    <property type="entry name" value="IMS"/>
    <property type="match status" value="1"/>
</dbReference>
<dbReference type="Pfam" id="PF11799">
    <property type="entry name" value="IMS_C"/>
    <property type="match status" value="1"/>
</dbReference>
<dbReference type="Pfam" id="PF11798">
    <property type="entry name" value="IMS_HHH"/>
    <property type="match status" value="1"/>
</dbReference>
<dbReference type="SUPFAM" id="SSF56672">
    <property type="entry name" value="DNA/RNA polymerases"/>
    <property type="match status" value="1"/>
</dbReference>
<dbReference type="SUPFAM" id="SSF100879">
    <property type="entry name" value="Lesion bypass DNA polymerase (Y-family), little finger domain"/>
    <property type="match status" value="1"/>
</dbReference>
<dbReference type="PROSITE" id="PS50173">
    <property type="entry name" value="UMUC"/>
    <property type="match status" value="1"/>
</dbReference>
<sequence>METRKIIHVDMDAFYASVEQRDFPEYKGKPLIVGGPPNSRSVVSAASYEARKFGVRSAMPCSKAAQLAPQAIFVFPRFEVYKEVSKQIREIFLEYTDLVEMLSLDEGYLDVTFNKKNIPFAVTIAKEIRTEIFKRTELTASAGVGNSKFISKLASEKNKPNGLTVVLPDDVISFIDPLPVSSFHGVGKVTARKMKELGIYTGKDLRTKSIDELVQHFGKMGIYYYKISRGEDERMVQSSRERKSLGAESTFDRDKLDYDDLLKQLKDVAVVVERRLEKKDFAGKTLTLKIKFYDFSLKTRSKTLSEPIFKADELYSTAIELFEEFFEIKYGKKSAIKAIRLLGISLSHPNSENEDPNLFLNL</sequence>
<gene>
    <name evidence="1" type="primary">dinB</name>
    <name type="ordered locus">LIC_13052</name>
</gene>
<reference key="1">
    <citation type="journal article" date="2004" name="J. Bacteriol.">
        <title>Comparative genomics of two Leptospira interrogans serovars reveals novel insights into physiology and pathogenesis.</title>
        <authorList>
            <person name="Nascimento A.L.T.O."/>
            <person name="Ko A.I."/>
            <person name="Martins E.A.L."/>
            <person name="Monteiro-Vitorello C.B."/>
            <person name="Ho P.L."/>
            <person name="Haake D.A."/>
            <person name="Verjovski-Almeida S."/>
            <person name="Hartskeerl R.A."/>
            <person name="Marques M.V."/>
            <person name="Oliveira M.C."/>
            <person name="Menck C.F.M."/>
            <person name="Leite L.C.C."/>
            <person name="Carrer H."/>
            <person name="Coutinho L.L."/>
            <person name="Degrave W.M."/>
            <person name="Dellagostin O.A."/>
            <person name="El-Dorry H."/>
            <person name="Ferro E.S."/>
            <person name="Ferro M.I.T."/>
            <person name="Furlan L.R."/>
            <person name="Gamberini M."/>
            <person name="Giglioti E.A."/>
            <person name="Goes-Neto A."/>
            <person name="Goldman G.H."/>
            <person name="Goldman M.H.S."/>
            <person name="Harakava R."/>
            <person name="Jeronimo S.M.B."/>
            <person name="Junqueira-de-Azevedo I.L.M."/>
            <person name="Kimura E.T."/>
            <person name="Kuramae E.E."/>
            <person name="Lemos E.G.M."/>
            <person name="Lemos M.V.F."/>
            <person name="Marino C.L."/>
            <person name="Nunes L.R."/>
            <person name="de Oliveira R.C."/>
            <person name="Pereira G.G."/>
            <person name="Reis M.S."/>
            <person name="Schriefer A."/>
            <person name="Siqueira W.J."/>
            <person name="Sommer P."/>
            <person name="Tsai S.M."/>
            <person name="Simpson A.J.G."/>
            <person name="Ferro J.A."/>
            <person name="Camargo L.E.A."/>
            <person name="Kitajima J.P."/>
            <person name="Setubal J.C."/>
            <person name="Van Sluys M.A."/>
        </authorList>
    </citation>
    <scope>NUCLEOTIDE SEQUENCE [LARGE SCALE GENOMIC DNA]</scope>
    <source>
        <strain>Fiocruz L1-130</strain>
    </source>
</reference>